<proteinExistence type="inferred from homology"/>
<dbReference type="EMBL" id="BA000003">
    <property type="protein sequence ID" value="BAB12985.1"/>
    <property type="molecule type" value="Genomic_DNA"/>
</dbReference>
<dbReference type="RefSeq" id="NP_240099.1">
    <property type="nucleotide sequence ID" value="NC_002528.1"/>
</dbReference>
<dbReference type="RefSeq" id="WP_010896039.1">
    <property type="nucleotide sequence ID" value="NZ_AP036055.1"/>
</dbReference>
<dbReference type="SMR" id="P57363"/>
<dbReference type="STRING" id="563178.BUAP5A_270"/>
<dbReference type="EnsemblBacteria" id="BAB12985">
    <property type="protein sequence ID" value="BAB12985"/>
    <property type="gene ID" value="BAB12985"/>
</dbReference>
<dbReference type="KEGG" id="buc:BU275"/>
<dbReference type="PATRIC" id="fig|107806.10.peg.285"/>
<dbReference type="eggNOG" id="COG2917">
    <property type="taxonomic scope" value="Bacteria"/>
</dbReference>
<dbReference type="HOGENOM" id="CLU_089554_2_0_6"/>
<dbReference type="BioCyc" id="BAPH107806:GBZJ-270-MONOMER"/>
<dbReference type="Proteomes" id="UP000001806">
    <property type="component" value="Chromosome"/>
</dbReference>
<dbReference type="GO" id="GO:0005886">
    <property type="term" value="C:plasma membrane"/>
    <property type="evidence" value="ECO:0007669"/>
    <property type="project" value="UniProtKB-SubCell"/>
</dbReference>
<dbReference type="HAMAP" id="MF_00189">
    <property type="entry name" value="YciB"/>
    <property type="match status" value="1"/>
</dbReference>
<dbReference type="InterPro" id="IPR006008">
    <property type="entry name" value="YciB"/>
</dbReference>
<dbReference type="NCBIfam" id="TIGR00997">
    <property type="entry name" value="ispZ"/>
    <property type="match status" value="1"/>
</dbReference>
<dbReference type="NCBIfam" id="NF001324">
    <property type="entry name" value="PRK00259.1-2"/>
    <property type="match status" value="1"/>
</dbReference>
<dbReference type="PANTHER" id="PTHR36917:SF1">
    <property type="entry name" value="INNER MEMBRANE-SPANNING PROTEIN YCIB"/>
    <property type="match status" value="1"/>
</dbReference>
<dbReference type="PANTHER" id="PTHR36917">
    <property type="entry name" value="INTRACELLULAR SEPTATION PROTEIN A-RELATED"/>
    <property type="match status" value="1"/>
</dbReference>
<dbReference type="Pfam" id="PF04279">
    <property type="entry name" value="IspA"/>
    <property type="match status" value="1"/>
</dbReference>
<comment type="function">
    <text evidence="1">Plays a role in cell envelope biogenesis, maintenance of cell envelope integrity and membrane homeostasis.</text>
</comment>
<comment type="subcellular location">
    <subcellularLocation>
        <location evidence="1">Cell inner membrane</location>
        <topology evidence="1">Multi-pass membrane protein</topology>
    </subcellularLocation>
</comment>
<comment type="similarity">
    <text evidence="1">Belongs to the YciB family.</text>
</comment>
<name>YCIB_BUCAI</name>
<reference key="1">
    <citation type="journal article" date="2000" name="Nature">
        <title>Genome sequence of the endocellular bacterial symbiont of aphids Buchnera sp. APS.</title>
        <authorList>
            <person name="Shigenobu S."/>
            <person name="Watanabe H."/>
            <person name="Hattori M."/>
            <person name="Sakaki Y."/>
            <person name="Ishikawa H."/>
        </authorList>
    </citation>
    <scope>NUCLEOTIDE SEQUENCE [LARGE SCALE GENOMIC DNA]</scope>
    <source>
        <strain>APS</strain>
    </source>
</reference>
<sequence>MKQILNILPMFIFFIFYKFYDIFIASGSLIVISGLICIIHWIFYNEIDKISLFSFLSVFFFGSLTIFFHNSQFIKWKITIIYIIFSLVLLISQFFTRKPMIQRFLEKDIKISNIYWRKINFIWSLFFLFCAILNIYIAYYFSETIWVNFKVFGFTSLTFFLILITSIYINCKISKNK</sequence>
<feature type="chain" id="PRO_0000206527" description="Inner membrane-spanning protein YciB">
    <location>
        <begin position="1"/>
        <end position="177"/>
    </location>
</feature>
<feature type="transmembrane region" description="Helical" evidence="1">
    <location>
        <begin position="22"/>
        <end position="42"/>
    </location>
</feature>
<feature type="transmembrane region" description="Helical" evidence="1">
    <location>
        <begin position="50"/>
        <end position="70"/>
    </location>
</feature>
<feature type="transmembrane region" description="Helical" evidence="1">
    <location>
        <begin position="76"/>
        <end position="96"/>
    </location>
</feature>
<feature type="transmembrane region" description="Helical" evidence="1">
    <location>
        <begin position="121"/>
        <end position="141"/>
    </location>
</feature>
<feature type="transmembrane region" description="Helical" evidence="1">
    <location>
        <begin position="149"/>
        <end position="169"/>
    </location>
</feature>
<keyword id="KW-0997">Cell inner membrane</keyword>
<keyword id="KW-1003">Cell membrane</keyword>
<keyword id="KW-0472">Membrane</keyword>
<keyword id="KW-1185">Reference proteome</keyword>
<keyword id="KW-0812">Transmembrane</keyword>
<keyword id="KW-1133">Transmembrane helix</keyword>
<protein>
    <recommendedName>
        <fullName evidence="1">Inner membrane-spanning protein YciB</fullName>
    </recommendedName>
</protein>
<organism>
    <name type="scientific">Buchnera aphidicola subsp. Acyrthosiphon pisum (strain APS)</name>
    <name type="common">Acyrthosiphon pisum symbiotic bacterium</name>
    <dbReference type="NCBI Taxonomy" id="107806"/>
    <lineage>
        <taxon>Bacteria</taxon>
        <taxon>Pseudomonadati</taxon>
        <taxon>Pseudomonadota</taxon>
        <taxon>Gammaproteobacteria</taxon>
        <taxon>Enterobacterales</taxon>
        <taxon>Erwiniaceae</taxon>
        <taxon>Buchnera</taxon>
    </lineage>
</organism>
<gene>
    <name evidence="1" type="primary">yciB</name>
    <name type="ordered locus">BU275</name>
</gene>
<accession>P57363</accession>
<evidence type="ECO:0000255" key="1">
    <source>
        <dbReference type="HAMAP-Rule" id="MF_00189"/>
    </source>
</evidence>